<comment type="function">
    <text evidence="1">Binds together with bS18 to 16S ribosomal RNA.</text>
</comment>
<comment type="similarity">
    <text evidence="1">Belongs to the bacterial ribosomal protein bS6 family.</text>
</comment>
<feature type="chain" id="PRO_1000005296" description="Small ribosomal subunit protein bS6">
    <location>
        <begin position="1"/>
        <end position="122"/>
    </location>
</feature>
<evidence type="ECO:0000255" key="1">
    <source>
        <dbReference type="HAMAP-Rule" id="MF_00360"/>
    </source>
</evidence>
<evidence type="ECO:0000305" key="2"/>
<sequence length="122" mass="13855">MRHYEIVLLIHPDQSEQVPAMLERYKGLVTAAGGKVHRVEDWGRRQLAYLINKLAKAHYLCLNIECSKETLLELETGFKFNDAVLRHLTVVKSKAETAPSIMMKAVEREESRKAPQPQEAAA</sequence>
<name>RS6_METPP</name>
<accession>A2SFZ9</accession>
<gene>
    <name evidence="1" type="primary">rpsF</name>
    <name type="ordered locus">Mpe_A1526</name>
</gene>
<proteinExistence type="inferred from homology"/>
<dbReference type="EMBL" id="CP000555">
    <property type="protein sequence ID" value="ABM94488.1"/>
    <property type="molecule type" value="Genomic_DNA"/>
</dbReference>
<dbReference type="RefSeq" id="WP_011829125.1">
    <property type="nucleotide sequence ID" value="NC_008825.1"/>
</dbReference>
<dbReference type="SMR" id="A2SFZ9"/>
<dbReference type="STRING" id="420662.Mpe_A1526"/>
<dbReference type="KEGG" id="mpt:Mpe_A1526"/>
<dbReference type="eggNOG" id="COG0360">
    <property type="taxonomic scope" value="Bacteria"/>
</dbReference>
<dbReference type="HOGENOM" id="CLU_113441_6_1_4"/>
<dbReference type="Proteomes" id="UP000000366">
    <property type="component" value="Chromosome"/>
</dbReference>
<dbReference type="GO" id="GO:0022627">
    <property type="term" value="C:cytosolic small ribosomal subunit"/>
    <property type="evidence" value="ECO:0007669"/>
    <property type="project" value="TreeGrafter"/>
</dbReference>
<dbReference type="GO" id="GO:0070181">
    <property type="term" value="F:small ribosomal subunit rRNA binding"/>
    <property type="evidence" value="ECO:0007669"/>
    <property type="project" value="TreeGrafter"/>
</dbReference>
<dbReference type="GO" id="GO:0003735">
    <property type="term" value="F:structural constituent of ribosome"/>
    <property type="evidence" value="ECO:0007669"/>
    <property type="project" value="InterPro"/>
</dbReference>
<dbReference type="GO" id="GO:0006412">
    <property type="term" value="P:translation"/>
    <property type="evidence" value="ECO:0007669"/>
    <property type="project" value="UniProtKB-UniRule"/>
</dbReference>
<dbReference type="CDD" id="cd00473">
    <property type="entry name" value="bS6"/>
    <property type="match status" value="1"/>
</dbReference>
<dbReference type="Gene3D" id="3.30.70.60">
    <property type="match status" value="1"/>
</dbReference>
<dbReference type="HAMAP" id="MF_00360">
    <property type="entry name" value="Ribosomal_bS6"/>
    <property type="match status" value="1"/>
</dbReference>
<dbReference type="InterPro" id="IPR000529">
    <property type="entry name" value="Ribosomal_bS6"/>
</dbReference>
<dbReference type="InterPro" id="IPR020815">
    <property type="entry name" value="Ribosomal_bS6_CS"/>
</dbReference>
<dbReference type="InterPro" id="IPR035980">
    <property type="entry name" value="Ribosomal_bS6_sf"/>
</dbReference>
<dbReference type="InterPro" id="IPR020814">
    <property type="entry name" value="Ribosomal_S6_plastid/chlpt"/>
</dbReference>
<dbReference type="InterPro" id="IPR014717">
    <property type="entry name" value="Transl_elong_EF1B/ribsomal_bS6"/>
</dbReference>
<dbReference type="NCBIfam" id="TIGR00166">
    <property type="entry name" value="S6"/>
    <property type="match status" value="1"/>
</dbReference>
<dbReference type="PANTHER" id="PTHR21011">
    <property type="entry name" value="MITOCHONDRIAL 28S RIBOSOMAL PROTEIN S6"/>
    <property type="match status" value="1"/>
</dbReference>
<dbReference type="PANTHER" id="PTHR21011:SF1">
    <property type="entry name" value="SMALL RIBOSOMAL SUBUNIT PROTEIN BS6M"/>
    <property type="match status" value="1"/>
</dbReference>
<dbReference type="Pfam" id="PF01250">
    <property type="entry name" value="Ribosomal_S6"/>
    <property type="match status" value="1"/>
</dbReference>
<dbReference type="SUPFAM" id="SSF54995">
    <property type="entry name" value="Ribosomal protein S6"/>
    <property type="match status" value="1"/>
</dbReference>
<dbReference type="PROSITE" id="PS01048">
    <property type="entry name" value="RIBOSOMAL_S6"/>
    <property type="match status" value="1"/>
</dbReference>
<protein>
    <recommendedName>
        <fullName evidence="1">Small ribosomal subunit protein bS6</fullName>
    </recommendedName>
    <alternativeName>
        <fullName evidence="2">30S ribosomal protein S6</fullName>
    </alternativeName>
</protein>
<keyword id="KW-1185">Reference proteome</keyword>
<keyword id="KW-0687">Ribonucleoprotein</keyword>
<keyword id="KW-0689">Ribosomal protein</keyword>
<keyword id="KW-0694">RNA-binding</keyword>
<keyword id="KW-0699">rRNA-binding</keyword>
<organism>
    <name type="scientific">Methylibium petroleiphilum (strain ATCC BAA-1232 / LMG 22953 / PM1)</name>
    <dbReference type="NCBI Taxonomy" id="420662"/>
    <lineage>
        <taxon>Bacteria</taxon>
        <taxon>Pseudomonadati</taxon>
        <taxon>Pseudomonadota</taxon>
        <taxon>Betaproteobacteria</taxon>
        <taxon>Burkholderiales</taxon>
        <taxon>Sphaerotilaceae</taxon>
        <taxon>Methylibium</taxon>
    </lineage>
</organism>
<reference key="1">
    <citation type="journal article" date="2007" name="J. Bacteriol.">
        <title>Whole-genome analysis of the methyl tert-butyl ether-degrading beta-proteobacterium Methylibium petroleiphilum PM1.</title>
        <authorList>
            <person name="Kane S.R."/>
            <person name="Chakicherla A.Y."/>
            <person name="Chain P.S.G."/>
            <person name="Schmidt R."/>
            <person name="Shin M.W."/>
            <person name="Legler T.C."/>
            <person name="Scow K.M."/>
            <person name="Larimer F.W."/>
            <person name="Lucas S.M."/>
            <person name="Richardson P.M."/>
            <person name="Hristova K.R."/>
        </authorList>
    </citation>
    <scope>NUCLEOTIDE SEQUENCE [LARGE SCALE GENOMIC DNA]</scope>
    <source>
        <strain>ATCC BAA-1232 / LMG 22953 / PM1</strain>
    </source>
</reference>